<proteinExistence type="evidence at protein level"/>
<name>CPS1_MARVU</name>
<organism>
    <name type="scientific">Marrubium vulgare</name>
    <name type="common">White horehound</name>
    <dbReference type="NCBI Taxonomy" id="41230"/>
    <lineage>
        <taxon>Eukaryota</taxon>
        <taxon>Viridiplantae</taxon>
        <taxon>Streptophyta</taxon>
        <taxon>Embryophyta</taxon>
        <taxon>Tracheophyta</taxon>
        <taxon>Spermatophyta</taxon>
        <taxon>Magnoliopsida</taxon>
        <taxon>eudicotyledons</taxon>
        <taxon>Gunneridae</taxon>
        <taxon>Pentapetalae</taxon>
        <taxon>asterids</taxon>
        <taxon>lamiids</taxon>
        <taxon>Lamiales</taxon>
        <taxon>Lamiaceae</taxon>
        <taxon>Lamioideae</taxon>
        <taxon>Marrubieae</taxon>
        <taxon>Marrubium</taxon>
    </lineage>
</organism>
<gene>
    <name evidence="5" type="primary">CPS1</name>
</gene>
<accession>A0A075FAK4</accession>
<protein>
    <recommendedName>
        <fullName evidence="5">Peregrinol diphosphate synthase CPS1, chloroplastic</fullName>
        <ecNumber evidence="4">4.2.1.174</ecNumber>
    </recommendedName>
    <alternativeName>
        <fullName evidence="5">(+)-copalyl diphosphate synthase 1</fullName>
        <shortName evidence="5">MvCPS1</shortName>
    </alternativeName>
</protein>
<evidence type="ECO:0000250" key="1">
    <source>
        <dbReference type="UniProtKB" id="C7BKP9"/>
    </source>
</evidence>
<evidence type="ECO:0000250" key="2">
    <source>
        <dbReference type="UniProtKB" id="Q38802"/>
    </source>
</evidence>
<evidence type="ECO:0000255" key="3"/>
<evidence type="ECO:0000269" key="4">
    <source>
    </source>
</evidence>
<evidence type="ECO:0000303" key="5">
    <source>
    </source>
</evidence>
<evidence type="ECO:0000305" key="6"/>
<evidence type="ECO:0000305" key="7">
    <source>
    </source>
</evidence>
<comment type="function">
    <text evidence="4 7">Involved in the biosynthesis of labdane-type diterpenoid including marrubiin and other labdane-related furanoid diterpenoids with potential applications as anti-diabetics, analgesics or vasorelaxants (Probable). Terpene synthase that produces peregrinol diphosphate from geranylgeranyl diphosphate (GGPP) (PubMed:24990389).</text>
</comment>
<comment type="catalytic activity">
    <reaction evidence="4">
        <text>peregrinol diphosphate = (2E,6E,10E)-geranylgeranyl diphosphate + H2O</text>
        <dbReference type="Rhea" id="RHEA:54652"/>
        <dbReference type="ChEBI" id="CHEBI:15377"/>
        <dbReference type="ChEBI" id="CHEBI:58756"/>
        <dbReference type="ChEBI" id="CHEBI:138232"/>
        <dbReference type="EC" id="4.2.1.174"/>
    </reaction>
    <physiologicalReaction direction="right-to-left" evidence="4">
        <dbReference type="Rhea" id="RHEA:54654"/>
    </physiologicalReaction>
</comment>
<comment type="cofactor">
    <cofactor evidence="2">
        <name>Mg(2+)</name>
        <dbReference type="ChEBI" id="CHEBI:18420"/>
    </cofactor>
</comment>
<comment type="pathway">
    <text evidence="7">Secondary metabolite biosynthesis; terpenoid biosynthesis.</text>
</comment>
<comment type="subcellular location">
    <subcellularLocation>
        <location evidence="3">Plastid</location>
        <location evidence="3">Chloroplast</location>
    </subcellularLocation>
</comment>
<comment type="tissue specificity">
    <text evidence="4">Present in both leaves and flowers, with higher levels in leaves.</text>
</comment>
<comment type="domain">
    <text evidence="6">The Asp-Xaa-Asp-Asp (DXDD) motif is important for the catalytic activity, presumably through binding to Mg(2+).</text>
</comment>
<comment type="similarity">
    <text evidence="6">Belongs to the terpene synthase family.</text>
</comment>
<sequence length="776" mass="89510">MASTPTLNLSITTPFVRTKIPAKISLPACSWLDRSSSRHVELNHKFCRKLELKVAMCRASLDVQQVRDEVYSNAQPHELVDKKIEERVKYVKNLLSTMDDGRINWSAYDTAWISLIKDFEGRDCPQFPSTLERIAENQLPDGSWGDKDFDCSYDRIINTLACVVALTTWNVHPEINQKGIRYLKENMRKLEETPTVLMTCAFEVVFPALLKKARNLGIHDLPYDMPIVKEICKIGDEKLARIPKKMMEKETTSLMYAAEGVENLDWERLLKLRTPENGSFLSSPAATVVAFMHTKDEDCLRYIKYLLNKFNGGAPNVYPVDLWSRLWATDRLQRLGISRYFESEIKDLLSYVHSYWTDIGVYCTRDSKYADIDDTSMGFRLLRVQGYNMDANVFKYFQKDDKFVCLGGQMNGSATATYNLYRAAQYQFPGEQILEDARKFSQQFLQESIDTNNLLDKWVISPHIPEEMRFGMEMTWYSCLPRIEASYYLQHYGATEDVWLGKTFFRMEEISNENYRELAILDFSKCQAQHQTEWIHMQEWYESNNVKEFGISRKDLLFAYFLAAASIFETERAKERILWARSKIICKMVKSFLEKETGSLEHKIAFLTGSGDKGNGPVNNAMATLHQLLGEFDGYISIQLENAWAAWLTKLEQGEANDGELLATTINICGGRVNQDTLSHNEYKALSDLTNKICHNLAQIQNDKGDEIKDSKRSERDKEVEQDMQALAKLVFEESDLERSIKQTFLAVVRTYYYGAYIAAEKIDVHMFKVLFKPVG</sequence>
<reference key="1">
    <citation type="journal article" date="2014" name="Plant J.">
        <title>Diterpene synthases of the biosynthetic system of medicinally active diterpenoids in Marrubium vulgare.</title>
        <authorList>
            <person name="Zerbe P."/>
            <person name="Chiang A."/>
            <person name="Dullat H."/>
            <person name="O'Neil-Johnson M."/>
            <person name="Starks C."/>
            <person name="Hamberger B."/>
            <person name="Bohlmann J."/>
        </authorList>
    </citation>
    <scope>NUCLEOTIDE SEQUENCE [MRNA]</scope>
    <scope>FUNCTION</scope>
    <scope>CATALYTIC ACTIVITY</scope>
    <scope>PATHWAY</scope>
    <scope>TISSUE SPECIFICITY</scope>
</reference>
<keyword id="KW-0150">Chloroplast</keyword>
<keyword id="KW-0456">Lyase</keyword>
<keyword id="KW-0460">Magnesium</keyword>
<keyword id="KW-0479">Metal-binding</keyword>
<keyword id="KW-0934">Plastid</keyword>
<keyword id="KW-0809">Transit peptide</keyword>
<dbReference type="EC" id="4.2.1.174" evidence="4"/>
<dbReference type="EMBL" id="KJ584450">
    <property type="protein sequence ID" value="AIE77090.1"/>
    <property type="molecule type" value="mRNA"/>
</dbReference>
<dbReference type="SMR" id="A0A075FAK4"/>
<dbReference type="KEGG" id="ag:AIE77090"/>
<dbReference type="BRENDA" id="4.2.1.174">
    <property type="organism ID" value="15343"/>
</dbReference>
<dbReference type="UniPathway" id="UPA00213"/>
<dbReference type="GO" id="GO:0009507">
    <property type="term" value="C:chloroplast"/>
    <property type="evidence" value="ECO:0007669"/>
    <property type="project" value="UniProtKB-SubCell"/>
</dbReference>
<dbReference type="GO" id="GO:0000287">
    <property type="term" value="F:magnesium ion binding"/>
    <property type="evidence" value="ECO:0007669"/>
    <property type="project" value="TreeGrafter"/>
</dbReference>
<dbReference type="GO" id="GO:0106238">
    <property type="term" value="F:peregrinol diphosphate synthase activity"/>
    <property type="evidence" value="ECO:0000314"/>
    <property type="project" value="UniProtKB"/>
</dbReference>
<dbReference type="GO" id="GO:0010333">
    <property type="term" value="F:terpene synthase activity"/>
    <property type="evidence" value="ECO:0007669"/>
    <property type="project" value="InterPro"/>
</dbReference>
<dbReference type="GO" id="GO:0009686">
    <property type="term" value="P:gibberellin biosynthetic process"/>
    <property type="evidence" value="ECO:0007669"/>
    <property type="project" value="TreeGrafter"/>
</dbReference>
<dbReference type="FunFam" id="1.50.10.130:FF:000002">
    <property type="entry name" value="Ent-copalyl diphosphate synthase, chloroplastic"/>
    <property type="match status" value="1"/>
</dbReference>
<dbReference type="Gene3D" id="1.50.10.160">
    <property type="match status" value="1"/>
</dbReference>
<dbReference type="Gene3D" id="1.10.600.10">
    <property type="entry name" value="Farnesyl Diphosphate Synthase"/>
    <property type="match status" value="1"/>
</dbReference>
<dbReference type="Gene3D" id="1.50.10.130">
    <property type="entry name" value="Terpene synthase, N-terminal domain"/>
    <property type="match status" value="1"/>
</dbReference>
<dbReference type="InterPro" id="IPR008949">
    <property type="entry name" value="Isoprenoid_synthase_dom_sf"/>
</dbReference>
<dbReference type="InterPro" id="IPR001906">
    <property type="entry name" value="Terpene_synth_N"/>
</dbReference>
<dbReference type="InterPro" id="IPR036965">
    <property type="entry name" value="Terpene_synth_N_sf"/>
</dbReference>
<dbReference type="InterPro" id="IPR050148">
    <property type="entry name" value="Terpene_synthase-like"/>
</dbReference>
<dbReference type="InterPro" id="IPR008930">
    <property type="entry name" value="Terpenoid_cyclase/PrenylTrfase"/>
</dbReference>
<dbReference type="PANTHER" id="PTHR31739:SF30">
    <property type="entry name" value="COPAL-8-OL DIPHOSPHATE HYDRATASE, CHLOROPLASTIC"/>
    <property type="match status" value="1"/>
</dbReference>
<dbReference type="PANTHER" id="PTHR31739">
    <property type="entry name" value="ENT-COPALYL DIPHOSPHATE SYNTHASE, CHLOROPLASTIC"/>
    <property type="match status" value="1"/>
</dbReference>
<dbReference type="Pfam" id="PF01397">
    <property type="entry name" value="Terpene_synth"/>
    <property type="match status" value="1"/>
</dbReference>
<dbReference type="SFLD" id="SFLDG01014">
    <property type="entry name" value="Terpene_Cyclase_Like_1_N-term"/>
    <property type="match status" value="1"/>
</dbReference>
<dbReference type="SFLD" id="SFLDG01605">
    <property type="entry name" value="Terpene_Cyclase_Like_1_N-term"/>
    <property type="match status" value="1"/>
</dbReference>
<dbReference type="SUPFAM" id="SSF48239">
    <property type="entry name" value="Terpenoid cyclases/Protein prenyltransferases"/>
    <property type="match status" value="2"/>
</dbReference>
<dbReference type="SUPFAM" id="SSF48576">
    <property type="entry name" value="Terpenoid synthases"/>
    <property type="match status" value="1"/>
</dbReference>
<feature type="transit peptide" description="Chloroplast" evidence="3">
    <location>
        <begin position="1"/>
        <end position="17"/>
    </location>
</feature>
<feature type="chain" id="PRO_0000449301" description="Peregrinol diphosphate synthase CPS1, chloroplastic">
    <location>
        <begin position="18"/>
        <end position="776"/>
    </location>
</feature>
<feature type="short sequence motif" description="DXDD motif" evidence="6">
    <location>
        <begin position="371"/>
        <end position="374"/>
    </location>
</feature>
<feature type="binding site" evidence="2">
    <location>
        <position position="238"/>
    </location>
    <ligand>
        <name>substrate</name>
    </ligand>
</feature>
<feature type="binding site" evidence="1">
    <location>
        <position position="371"/>
    </location>
    <ligand>
        <name>Mg(2+)</name>
        <dbReference type="ChEBI" id="CHEBI:18420"/>
    </ligand>
</feature>
<feature type="binding site" evidence="1">
    <location>
        <position position="373"/>
    </location>
    <ligand>
        <name>Mg(2+)</name>
        <dbReference type="ChEBI" id="CHEBI:18420"/>
    </ligand>
</feature>
<feature type="binding site" evidence="2">
    <location>
        <position position="457"/>
    </location>
    <ligand>
        <name>substrate</name>
    </ligand>
</feature>